<sequence>MREKELKHIENLLLLKVKKEKIEETDKIKEYLKRFEDERRFDGIKESTIKSDLDRLRVFLDYCINYLGKNPEELKTSDFVKFFNYLDTVRKVSKSSQRKYFLLLKVFYRVLRMYNVIQEFVEESKDRKRFARIEIQHYDAVDAEMLNMILKKIIESGSRTRIRDALIIRLLWDTGCRVSEVLNLKYKDCDLDNGIFKIRNTKTHEERTVVCSSDTLELLRNYVQFNVRQGSDDYLFQNSQGGRVRKEWISEVFRKAVNELKEEGKIPKNRRIVIHSIRHGRAVDLLNKGVPIDIVKEYLGHKSMNTTLIYAHSKERAESLEFIKKLLRIQ</sequence>
<evidence type="ECO:0000255" key="1">
    <source>
        <dbReference type="PROSITE-ProRule" id="PRU01246"/>
    </source>
</evidence>
<evidence type="ECO:0000255" key="2">
    <source>
        <dbReference type="PROSITE-ProRule" id="PRU01248"/>
    </source>
</evidence>
<evidence type="ECO:0000305" key="3"/>
<accession>Q57813</accession>
<proteinExistence type="inferred from homology"/>
<gene>
    <name type="ordered locus">MJ0367</name>
</gene>
<feature type="chain" id="PRO_0000197583" description="Probable integrase/recombinase protein MJ0367">
    <location>
        <begin position="1"/>
        <end position="330"/>
    </location>
</feature>
<feature type="domain" description="Core-binding (CB)" evidence="2">
    <location>
        <begin position="22"/>
        <end position="112"/>
    </location>
</feature>
<feature type="domain" description="Tyr recombinase" evidence="1">
    <location>
        <begin position="136"/>
        <end position="325"/>
    </location>
</feature>
<feature type="active site" evidence="1">
    <location>
        <position position="177"/>
    </location>
</feature>
<feature type="active site" evidence="1">
    <location>
        <position position="202"/>
    </location>
</feature>
<feature type="active site" evidence="1">
    <location>
        <position position="275"/>
    </location>
</feature>
<feature type="active site" evidence="1">
    <location>
        <position position="278"/>
    </location>
</feature>
<feature type="active site" evidence="1">
    <location>
        <position position="301"/>
    </location>
</feature>
<feature type="active site" description="O-(3'-phospho-DNA)-tyrosine intermediate" evidence="1">
    <location>
        <position position="310"/>
    </location>
</feature>
<reference key="1">
    <citation type="journal article" date="1996" name="Science">
        <title>Complete genome sequence of the methanogenic archaeon, Methanococcus jannaschii.</title>
        <authorList>
            <person name="Bult C.J."/>
            <person name="White O."/>
            <person name="Olsen G.J."/>
            <person name="Zhou L."/>
            <person name="Fleischmann R.D."/>
            <person name="Sutton G.G."/>
            <person name="Blake J.A."/>
            <person name="FitzGerald L.M."/>
            <person name="Clayton R.A."/>
            <person name="Gocayne J.D."/>
            <person name="Kerlavage A.R."/>
            <person name="Dougherty B.A."/>
            <person name="Tomb J.-F."/>
            <person name="Adams M.D."/>
            <person name="Reich C.I."/>
            <person name="Overbeek R."/>
            <person name="Kirkness E.F."/>
            <person name="Weinstock K.G."/>
            <person name="Merrick J.M."/>
            <person name="Glodek A."/>
            <person name="Scott J.L."/>
            <person name="Geoghagen N.S.M."/>
            <person name="Weidman J.F."/>
            <person name="Fuhrmann J.L."/>
            <person name="Nguyen D."/>
            <person name="Utterback T.R."/>
            <person name="Kelley J.M."/>
            <person name="Peterson J.D."/>
            <person name="Sadow P.W."/>
            <person name="Hanna M.C."/>
            <person name="Cotton M.D."/>
            <person name="Roberts K.M."/>
            <person name="Hurst M.A."/>
            <person name="Kaine B.P."/>
            <person name="Borodovsky M."/>
            <person name="Klenk H.-P."/>
            <person name="Fraser C.M."/>
            <person name="Smith H.O."/>
            <person name="Woese C.R."/>
            <person name="Venter J.C."/>
        </authorList>
    </citation>
    <scope>NUCLEOTIDE SEQUENCE [LARGE SCALE GENOMIC DNA]</scope>
    <source>
        <strain>ATCC 43067 / DSM 2661 / JAL-1 / JCM 10045 / NBRC 100440</strain>
    </source>
</reference>
<comment type="similarity">
    <text evidence="3">Belongs to the 'phage' integrase family.</text>
</comment>
<protein>
    <recommendedName>
        <fullName>Probable integrase/recombinase protein MJ0367</fullName>
    </recommendedName>
</protein>
<organism>
    <name type="scientific">Methanocaldococcus jannaschii (strain ATCC 43067 / DSM 2661 / JAL-1 / JCM 10045 / NBRC 100440)</name>
    <name type="common">Methanococcus jannaschii</name>
    <dbReference type="NCBI Taxonomy" id="243232"/>
    <lineage>
        <taxon>Archaea</taxon>
        <taxon>Methanobacteriati</taxon>
        <taxon>Methanobacteriota</taxon>
        <taxon>Methanomada group</taxon>
        <taxon>Methanococci</taxon>
        <taxon>Methanococcales</taxon>
        <taxon>Methanocaldococcaceae</taxon>
        <taxon>Methanocaldococcus</taxon>
    </lineage>
</organism>
<keyword id="KW-0229">DNA integration</keyword>
<keyword id="KW-0233">DNA recombination</keyword>
<keyword id="KW-0238">DNA-binding</keyword>
<keyword id="KW-1185">Reference proteome</keyword>
<keyword id="KW-1179">Viral genome integration</keyword>
<keyword id="KW-1160">Virus entry into host cell</keyword>
<name>Y367_METJA</name>
<dbReference type="EMBL" id="L77117">
    <property type="protein sequence ID" value="AAB98346.1"/>
    <property type="molecule type" value="Genomic_DNA"/>
</dbReference>
<dbReference type="PIR" id="G64345">
    <property type="entry name" value="G64345"/>
</dbReference>
<dbReference type="RefSeq" id="WP_010869866.1">
    <property type="nucleotide sequence ID" value="NC_000909.1"/>
</dbReference>
<dbReference type="SMR" id="Q57813"/>
<dbReference type="FunCoup" id="Q57813">
    <property type="interactions" value="4"/>
</dbReference>
<dbReference type="STRING" id="243232.MJ_0367"/>
<dbReference type="PaxDb" id="243232-MJ_0367"/>
<dbReference type="DNASU" id="1451224"/>
<dbReference type="EnsemblBacteria" id="AAB98346">
    <property type="protein sequence ID" value="AAB98346"/>
    <property type="gene ID" value="MJ_0367"/>
</dbReference>
<dbReference type="GeneID" id="1451224"/>
<dbReference type="KEGG" id="mja:MJ_0367"/>
<dbReference type="eggNOG" id="arCOG01241">
    <property type="taxonomic scope" value="Archaea"/>
</dbReference>
<dbReference type="HOGENOM" id="CLU_027562_9_5_2"/>
<dbReference type="InParanoid" id="Q57813"/>
<dbReference type="OrthoDB" id="142231at2157"/>
<dbReference type="PhylomeDB" id="Q57813"/>
<dbReference type="Proteomes" id="UP000000805">
    <property type="component" value="Chromosome"/>
</dbReference>
<dbReference type="GO" id="GO:0003677">
    <property type="term" value="F:DNA binding"/>
    <property type="evidence" value="ECO:0007669"/>
    <property type="project" value="UniProtKB-KW"/>
</dbReference>
<dbReference type="GO" id="GO:0009009">
    <property type="term" value="F:site-specific recombinase activity"/>
    <property type="evidence" value="ECO:0000318"/>
    <property type="project" value="GO_Central"/>
</dbReference>
<dbReference type="GO" id="GO:0007059">
    <property type="term" value="P:chromosome segregation"/>
    <property type="evidence" value="ECO:0000318"/>
    <property type="project" value="GO_Central"/>
</dbReference>
<dbReference type="GO" id="GO:0006310">
    <property type="term" value="P:DNA recombination"/>
    <property type="evidence" value="ECO:0000318"/>
    <property type="project" value="GO_Central"/>
</dbReference>
<dbReference type="GO" id="GO:0075713">
    <property type="term" value="P:establishment of integrated proviral latency"/>
    <property type="evidence" value="ECO:0007669"/>
    <property type="project" value="UniProtKB-KW"/>
</dbReference>
<dbReference type="GO" id="GO:0046718">
    <property type="term" value="P:symbiont entry into host cell"/>
    <property type="evidence" value="ECO:0007669"/>
    <property type="project" value="UniProtKB-KW"/>
</dbReference>
<dbReference type="GO" id="GO:0044826">
    <property type="term" value="P:viral genome integration into host DNA"/>
    <property type="evidence" value="ECO:0007669"/>
    <property type="project" value="UniProtKB-KW"/>
</dbReference>
<dbReference type="CDD" id="cd00397">
    <property type="entry name" value="DNA_BRE_C"/>
    <property type="match status" value="1"/>
</dbReference>
<dbReference type="Gene3D" id="1.10.150.130">
    <property type="match status" value="1"/>
</dbReference>
<dbReference type="Gene3D" id="1.10.443.10">
    <property type="entry name" value="Intergrase catalytic core"/>
    <property type="match status" value="1"/>
</dbReference>
<dbReference type="InterPro" id="IPR044068">
    <property type="entry name" value="CB"/>
</dbReference>
<dbReference type="InterPro" id="IPR011010">
    <property type="entry name" value="DNA_brk_join_enz"/>
</dbReference>
<dbReference type="InterPro" id="IPR013762">
    <property type="entry name" value="Integrase-like_cat_sf"/>
</dbReference>
<dbReference type="InterPro" id="IPR002104">
    <property type="entry name" value="Integrase_catalytic"/>
</dbReference>
<dbReference type="InterPro" id="IPR010998">
    <property type="entry name" value="Integrase_recombinase_N"/>
</dbReference>
<dbReference type="InterPro" id="IPR004107">
    <property type="entry name" value="Integrase_SAM-like_N"/>
</dbReference>
<dbReference type="InterPro" id="IPR050090">
    <property type="entry name" value="Tyrosine_recombinase_XerCD"/>
</dbReference>
<dbReference type="PANTHER" id="PTHR30349:SF41">
    <property type="entry name" value="INTEGRASE_RECOMBINASE PROTEIN MJ0367-RELATED"/>
    <property type="match status" value="1"/>
</dbReference>
<dbReference type="PANTHER" id="PTHR30349">
    <property type="entry name" value="PHAGE INTEGRASE-RELATED"/>
    <property type="match status" value="1"/>
</dbReference>
<dbReference type="Pfam" id="PF13495">
    <property type="entry name" value="Phage_int_SAM_4"/>
    <property type="match status" value="1"/>
</dbReference>
<dbReference type="Pfam" id="PF00589">
    <property type="entry name" value="Phage_integrase"/>
    <property type="match status" value="1"/>
</dbReference>
<dbReference type="SUPFAM" id="SSF56349">
    <property type="entry name" value="DNA breaking-rejoining enzymes"/>
    <property type="match status" value="1"/>
</dbReference>
<dbReference type="PROSITE" id="PS51900">
    <property type="entry name" value="CB"/>
    <property type="match status" value="1"/>
</dbReference>
<dbReference type="PROSITE" id="PS51898">
    <property type="entry name" value="TYR_RECOMBINASE"/>
    <property type="match status" value="1"/>
</dbReference>